<proteinExistence type="evidence at protein level"/>
<reference key="1">
    <citation type="journal article" date="2003" name="Genome Res.">
        <title>The secreted protein discovery initiative (SPDI), a large-scale effort to identify novel human secreted and transmembrane proteins: a bioinformatics assessment.</title>
        <authorList>
            <person name="Clark H.F."/>
            <person name="Gurney A.L."/>
            <person name="Abaya E."/>
            <person name="Baker K."/>
            <person name="Baldwin D.T."/>
            <person name="Brush J."/>
            <person name="Chen J."/>
            <person name="Chow B."/>
            <person name="Chui C."/>
            <person name="Crowley C."/>
            <person name="Currell B."/>
            <person name="Deuel B."/>
            <person name="Dowd P."/>
            <person name="Eaton D."/>
            <person name="Foster J.S."/>
            <person name="Grimaldi C."/>
            <person name="Gu Q."/>
            <person name="Hass P.E."/>
            <person name="Heldens S."/>
            <person name="Huang A."/>
            <person name="Kim H.S."/>
            <person name="Klimowski L."/>
            <person name="Jin Y."/>
            <person name="Johnson S."/>
            <person name="Lee J."/>
            <person name="Lewis L."/>
            <person name="Liao D."/>
            <person name="Mark M.R."/>
            <person name="Robbie E."/>
            <person name="Sanchez C."/>
            <person name="Schoenfeld J."/>
            <person name="Seshagiri S."/>
            <person name="Simmons L."/>
            <person name="Singh J."/>
            <person name="Smith V."/>
            <person name="Stinson J."/>
            <person name="Vagts A."/>
            <person name="Vandlen R.L."/>
            <person name="Watanabe C."/>
            <person name="Wieand D."/>
            <person name="Woods K."/>
            <person name="Xie M.-H."/>
            <person name="Yansura D.G."/>
            <person name="Yi S."/>
            <person name="Yu G."/>
            <person name="Yuan J."/>
            <person name="Zhang M."/>
            <person name="Zhang Z."/>
            <person name="Goddard A.D."/>
            <person name="Wood W.I."/>
            <person name="Godowski P.J."/>
            <person name="Gray A.M."/>
        </authorList>
    </citation>
    <scope>NUCLEOTIDE SEQUENCE [LARGE SCALE MRNA] (ISOFORM 1)</scope>
</reference>
<reference key="2">
    <citation type="journal article" date="2004" name="Nat. Genet.">
        <title>Complete sequencing and characterization of 21,243 full-length human cDNAs.</title>
        <authorList>
            <person name="Ota T."/>
            <person name="Suzuki Y."/>
            <person name="Nishikawa T."/>
            <person name="Otsuki T."/>
            <person name="Sugiyama T."/>
            <person name="Irie R."/>
            <person name="Wakamatsu A."/>
            <person name="Hayashi K."/>
            <person name="Sato H."/>
            <person name="Nagai K."/>
            <person name="Kimura K."/>
            <person name="Makita H."/>
            <person name="Sekine M."/>
            <person name="Obayashi M."/>
            <person name="Nishi T."/>
            <person name="Shibahara T."/>
            <person name="Tanaka T."/>
            <person name="Ishii S."/>
            <person name="Yamamoto J."/>
            <person name="Saito K."/>
            <person name="Kawai Y."/>
            <person name="Isono Y."/>
            <person name="Nakamura Y."/>
            <person name="Nagahari K."/>
            <person name="Murakami K."/>
            <person name="Yasuda T."/>
            <person name="Iwayanagi T."/>
            <person name="Wagatsuma M."/>
            <person name="Shiratori A."/>
            <person name="Sudo H."/>
            <person name="Hosoiri T."/>
            <person name="Kaku Y."/>
            <person name="Kodaira H."/>
            <person name="Kondo H."/>
            <person name="Sugawara M."/>
            <person name="Takahashi M."/>
            <person name="Kanda K."/>
            <person name="Yokoi T."/>
            <person name="Furuya T."/>
            <person name="Kikkawa E."/>
            <person name="Omura Y."/>
            <person name="Abe K."/>
            <person name="Kamihara K."/>
            <person name="Katsuta N."/>
            <person name="Sato K."/>
            <person name="Tanikawa M."/>
            <person name="Yamazaki M."/>
            <person name="Ninomiya K."/>
            <person name="Ishibashi T."/>
            <person name="Yamashita H."/>
            <person name="Murakawa K."/>
            <person name="Fujimori K."/>
            <person name="Tanai H."/>
            <person name="Kimata M."/>
            <person name="Watanabe M."/>
            <person name="Hiraoka S."/>
            <person name="Chiba Y."/>
            <person name="Ishida S."/>
            <person name="Ono Y."/>
            <person name="Takiguchi S."/>
            <person name="Watanabe S."/>
            <person name="Yosida M."/>
            <person name="Hotuta T."/>
            <person name="Kusano J."/>
            <person name="Kanehori K."/>
            <person name="Takahashi-Fujii A."/>
            <person name="Hara H."/>
            <person name="Tanase T.-O."/>
            <person name="Nomura Y."/>
            <person name="Togiya S."/>
            <person name="Komai F."/>
            <person name="Hara R."/>
            <person name="Takeuchi K."/>
            <person name="Arita M."/>
            <person name="Imose N."/>
            <person name="Musashino K."/>
            <person name="Yuuki H."/>
            <person name="Oshima A."/>
            <person name="Sasaki N."/>
            <person name="Aotsuka S."/>
            <person name="Yoshikawa Y."/>
            <person name="Matsunawa H."/>
            <person name="Ichihara T."/>
            <person name="Shiohata N."/>
            <person name="Sano S."/>
            <person name="Moriya S."/>
            <person name="Momiyama H."/>
            <person name="Satoh N."/>
            <person name="Takami S."/>
            <person name="Terashima Y."/>
            <person name="Suzuki O."/>
            <person name="Nakagawa S."/>
            <person name="Senoh A."/>
            <person name="Mizoguchi H."/>
            <person name="Goto Y."/>
            <person name="Shimizu F."/>
            <person name="Wakebe H."/>
            <person name="Hishigaki H."/>
            <person name="Watanabe T."/>
            <person name="Sugiyama A."/>
            <person name="Takemoto M."/>
            <person name="Kawakami B."/>
            <person name="Yamazaki M."/>
            <person name="Watanabe K."/>
            <person name="Kumagai A."/>
            <person name="Itakura S."/>
            <person name="Fukuzumi Y."/>
            <person name="Fujimori Y."/>
            <person name="Komiyama M."/>
            <person name="Tashiro H."/>
            <person name="Tanigami A."/>
            <person name="Fujiwara T."/>
            <person name="Ono T."/>
            <person name="Yamada K."/>
            <person name="Fujii Y."/>
            <person name="Ozaki K."/>
            <person name="Hirao M."/>
            <person name="Ohmori Y."/>
            <person name="Kawabata A."/>
            <person name="Hikiji T."/>
            <person name="Kobatake N."/>
            <person name="Inagaki H."/>
            <person name="Ikema Y."/>
            <person name="Okamoto S."/>
            <person name="Okitani R."/>
            <person name="Kawakami T."/>
            <person name="Noguchi S."/>
            <person name="Itoh T."/>
            <person name="Shigeta K."/>
            <person name="Senba T."/>
            <person name="Matsumura K."/>
            <person name="Nakajima Y."/>
            <person name="Mizuno T."/>
            <person name="Morinaga M."/>
            <person name="Sasaki M."/>
            <person name="Togashi T."/>
            <person name="Oyama M."/>
            <person name="Hata H."/>
            <person name="Watanabe M."/>
            <person name="Komatsu T."/>
            <person name="Mizushima-Sugano J."/>
            <person name="Satoh T."/>
            <person name="Shirai Y."/>
            <person name="Takahashi Y."/>
            <person name="Nakagawa K."/>
            <person name="Okumura K."/>
            <person name="Nagase T."/>
            <person name="Nomura N."/>
            <person name="Kikuchi H."/>
            <person name="Masuho Y."/>
            <person name="Yamashita R."/>
            <person name="Nakai K."/>
            <person name="Yada T."/>
            <person name="Nakamura Y."/>
            <person name="Ohara O."/>
            <person name="Isogai T."/>
            <person name="Sugano S."/>
        </authorList>
    </citation>
    <scope>NUCLEOTIDE SEQUENCE [LARGE SCALE MRNA] (ISOFORM 2)</scope>
    <scope>NUCLEOTIDE SEQUENCE [LARGE SCALE MRNA] OF 206-677 (ISOFORM 1)</scope>
    <scope>VARIANT THR-445</scope>
</reference>
<reference key="3">
    <citation type="journal article" date="2004" name="Nature">
        <title>The DNA sequence and analysis of human chromosome 13.</title>
        <authorList>
            <person name="Dunham A."/>
            <person name="Matthews L.H."/>
            <person name="Burton J."/>
            <person name="Ashurst J.L."/>
            <person name="Howe K.L."/>
            <person name="Ashcroft K.J."/>
            <person name="Beare D.M."/>
            <person name="Burford D.C."/>
            <person name="Hunt S.E."/>
            <person name="Griffiths-Jones S."/>
            <person name="Jones M.C."/>
            <person name="Keenan S.J."/>
            <person name="Oliver K."/>
            <person name="Scott C.E."/>
            <person name="Ainscough R."/>
            <person name="Almeida J.P."/>
            <person name="Ambrose K.D."/>
            <person name="Andrews D.T."/>
            <person name="Ashwell R.I.S."/>
            <person name="Babbage A.K."/>
            <person name="Bagguley C.L."/>
            <person name="Bailey J."/>
            <person name="Bannerjee R."/>
            <person name="Barlow K.F."/>
            <person name="Bates K."/>
            <person name="Beasley H."/>
            <person name="Bird C.P."/>
            <person name="Bray-Allen S."/>
            <person name="Brown A.J."/>
            <person name="Brown J.Y."/>
            <person name="Burrill W."/>
            <person name="Carder C."/>
            <person name="Carter N.P."/>
            <person name="Chapman J.C."/>
            <person name="Clamp M.E."/>
            <person name="Clark S.Y."/>
            <person name="Clarke G."/>
            <person name="Clee C.M."/>
            <person name="Clegg S.C."/>
            <person name="Cobley V."/>
            <person name="Collins J.E."/>
            <person name="Corby N."/>
            <person name="Coville G.J."/>
            <person name="Deloukas P."/>
            <person name="Dhami P."/>
            <person name="Dunham I."/>
            <person name="Dunn M."/>
            <person name="Earthrowl M.E."/>
            <person name="Ellington A.G."/>
            <person name="Faulkner L."/>
            <person name="Frankish A.G."/>
            <person name="Frankland J."/>
            <person name="French L."/>
            <person name="Garner P."/>
            <person name="Garnett J."/>
            <person name="Gilbert J.G.R."/>
            <person name="Gilson C.J."/>
            <person name="Ghori J."/>
            <person name="Grafham D.V."/>
            <person name="Gribble S.M."/>
            <person name="Griffiths C."/>
            <person name="Hall R.E."/>
            <person name="Hammond S."/>
            <person name="Harley J.L."/>
            <person name="Hart E.A."/>
            <person name="Heath P.D."/>
            <person name="Howden P.J."/>
            <person name="Huckle E.J."/>
            <person name="Hunt P.J."/>
            <person name="Hunt A.R."/>
            <person name="Johnson C."/>
            <person name="Johnson D."/>
            <person name="Kay M."/>
            <person name="Kimberley A.M."/>
            <person name="King A."/>
            <person name="Laird G.K."/>
            <person name="Langford C.J."/>
            <person name="Lawlor S."/>
            <person name="Leongamornlert D.A."/>
            <person name="Lloyd D.M."/>
            <person name="Lloyd C."/>
            <person name="Loveland J.E."/>
            <person name="Lovell J."/>
            <person name="Martin S."/>
            <person name="Mashreghi-Mohammadi M."/>
            <person name="McLaren S.J."/>
            <person name="McMurray A."/>
            <person name="Milne S."/>
            <person name="Moore M.J.F."/>
            <person name="Nickerson T."/>
            <person name="Palmer S.A."/>
            <person name="Pearce A.V."/>
            <person name="Peck A.I."/>
            <person name="Pelan S."/>
            <person name="Phillimore B."/>
            <person name="Porter K.M."/>
            <person name="Rice C.M."/>
            <person name="Searle S."/>
            <person name="Sehra H.K."/>
            <person name="Shownkeen R."/>
            <person name="Skuce C.D."/>
            <person name="Smith M."/>
            <person name="Steward C.A."/>
            <person name="Sycamore N."/>
            <person name="Tester J."/>
            <person name="Thomas D.W."/>
            <person name="Tracey A."/>
            <person name="Tromans A."/>
            <person name="Tubby B."/>
            <person name="Wall M."/>
            <person name="Wallis J.M."/>
            <person name="West A.P."/>
            <person name="Whitehead S.L."/>
            <person name="Willey D.L."/>
            <person name="Wilming L."/>
            <person name="Wray P.W."/>
            <person name="Wright M.W."/>
            <person name="Young L."/>
            <person name="Coulson A."/>
            <person name="Durbin R.M."/>
            <person name="Hubbard T."/>
            <person name="Sulston J.E."/>
            <person name="Beck S."/>
            <person name="Bentley D.R."/>
            <person name="Rogers J."/>
            <person name="Ross M.T."/>
        </authorList>
    </citation>
    <scope>NUCLEOTIDE SEQUENCE [LARGE SCALE GENOMIC DNA]</scope>
</reference>
<reference key="4">
    <citation type="journal article" date="2004" name="Genome Res.">
        <title>The status, quality, and expansion of the NIH full-length cDNA project: the Mammalian Gene Collection (MGC).</title>
        <authorList>
            <consortium name="The MGC Project Team"/>
        </authorList>
    </citation>
    <scope>NUCLEOTIDE SEQUENCE [LARGE SCALE MRNA] (ISOFORMS 1 AND 3)</scope>
    <source>
        <tissue>Hippocampus</tissue>
    </source>
</reference>
<reference key="5">
    <citation type="submission" date="1999-11" db="EMBL/GenBank/DDBJ databases">
        <title>Interactors of a human homolog of yeast LAG1 gene.</title>
        <authorList>
            <person name="Pan H."/>
            <person name="Xu Z.G."/>
            <person name="Huo K.K."/>
            <person name="Li Y.Y."/>
        </authorList>
    </citation>
    <scope>NUCLEOTIDE SEQUENCE [MRNA] OF 143-397 (ISOFORM 1)</scope>
</reference>
<reference key="6">
    <citation type="journal article" date="2016" name="Sci. Rep.">
        <title>Mutations in the TMCO3 gene are associated with cornea guttata and anterior polar cataract.</title>
        <authorList>
            <person name="Chen P."/>
            <person name="Hao X."/>
            <person name="Li W."/>
            <person name="Zhao X."/>
            <person name="Huang Y."/>
        </authorList>
    </citation>
    <scope>VARIANT LEU-14</scope>
    <scope>TISSUE SPECIFICITY</scope>
</reference>
<feature type="signal peptide" evidence="2">
    <location>
        <begin position="1"/>
        <end position="22"/>
    </location>
</feature>
<feature type="chain" id="PRO_0000249856" description="Transmembrane and coiled-coil domain-containing protein 3">
    <location>
        <begin position="23"/>
        <end position="677"/>
    </location>
</feature>
<feature type="transmembrane region" description="Helical" evidence="2">
    <location>
        <begin position="286"/>
        <end position="306"/>
    </location>
</feature>
<feature type="transmembrane region" description="Helical" evidence="2">
    <location>
        <begin position="317"/>
        <end position="337"/>
    </location>
</feature>
<feature type="transmembrane region" description="Helical" evidence="2">
    <location>
        <begin position="350"/>
        <end position="370"/>
    </location>
</feature>
<feature type="transmembrane region" description="Helical" evidence="2">
    <location>
        <begin position="416"/>
        <end position="436"/>
    </location>
</feature>
<feature type="transmembrane region" description="Helical" evidence="2">
    <location>
        <begin position="456"/>
        <end position="476"/>
    </location>
</feature>
<feature type="transmembrane region" description="Helical" evidence="2">
    <location>
        <begin position="498"/>
        <end position="518"/>
    </location>
</feature>
<feature type="transmembrane region" description="Helical" evidence="2">
    <location>
        <begin position="554"/>
        <end position="574"/>
    </location>
</feature>
<feature type="transmembrane region" description="Helical" evidence="2">
    <location>
        <begin position="578"/>
        <end position="598"/>
    </location>
</feature>
<feature type="transmembrane region" description="Helical" evidence="2">
    <location>
        <begin position="608"/>
        <end position="628"/>
    </location>
</feature>
<feature type="transmembrane region" description="Helical" evidence="2">
    <location>
        <begin position="640"/>
        <end position="660"/>
    </location>
</feature>
<feature type="coiled-coil region" evidence="2">
    <location>
        <begin position="124"/>
        <end position="204"/>
    </location>
</feature>
<feature type="glycosylation site" description="N-linked (GlcNAc...) asparagine" evidence="2">
    <location>
        <position position="206"/>
    </location>
</feature>
<feature type="glycosylation site" description="N-linked (GlcNAc...) asparagine" evidence="2">
    <location>
        <position position="230"/>
    </location>
</feature>
<feature type="splice variant" id="VSP_020561" description="In isoform 3." evidence="6">
    <original>DIDYS</original>
    <variation>NRTAL</variation>
    <location>
        <begin position="410"/>
        <end position="414"/>
    </location>
</feature>
<feature type="splice variant" id="VSP_020562" description="In isoform 3." evidence="6">
    <location>
        <begin position="415"/>
        <end position="677"/>
    </location>
</feature>
<feature type="splice variant" id="VSP_020563" description="In isoform 2." evidence="5">
    <original>TELLDVSMEL</original>
    <variation>ILKLCVIYVI</variation>
    <location>
        <begin position="515"/>
        <end position="524"/>
    </location>
</feature>
<feature type="splice variant" id="VSP_020564" description="In isoform 2." evidence="5">
    <location>
        <begin position="525"/>
        <end position="677"/>
    </location>
</feature>
<feature type="sequence variant" id="VAR_076964" description="Found in a patient with cornea guttata with anterior polar cataracts; uncertain significance; dbSNP:rs185071949.">
    <original>P</original>
    <variation>L</variation>
    <location>
        <position position="14"/>
    </location>
</feature>
<feature type="sequence variant" id="VAR_050037" description="In dbSNP:rs2260335.">
    <original>A</original>
    <variation>T</variation>
    <location>
        <position position="443"/>
    </location>
</feature>
<feature type="sequence variant" id="VAR_050038" description="In dbSNP:rs7319493." evidence="3">
    <original>A</original>
    <variation>T</variation>
    <location>
        <position position="445"/>
    </location>
</feature>
<feature type="sequence conflict" description="In Ref. 2; BAA91295." evidence="7" ref="2">
    <original>E</original>
    <variation>G</variation>
    <location>
        <position position="223"/>
    </location>
</feature>
<feature type="sequence conflict" description="In Ref. 5; AAM92892." evidence="7" ref="5">
    <original>S</original>
    <variation>N</variation>
    <location>
        <position position="380"/>
    </location>
</feature>
<feature type="sequence conflict" description="In Ref. 5; AAM92892." evidence="7" ref="5">
    <original>S</original>
    <variation>A</variation>
    <location>
        <position position="388"/>
    </location>
</feature>
<feature type="sequence conflict" description="In Ref. 4; AAH68515." evidence="7" ref="4">
    <original>P</original>
    <variation>R</variation>
    <location>
        <position position="436"/>
    </location>
</feature>
<evidence type="ECO:0000250" key="1"/>
<evidence type="ECO:0000255" key="2"/>
<evidence type="ECO:0000269" key="3">
    <source>
    </source>
</evidence>
<evidence type="ECO:0000269" key="4">
    <source>
    </source>
</evidence>
<evidence type="ECO:0000303" key="5">
    <source>
    </source>
</evidence>
<evidence type="ECO:0000303" key="6">
    <source>
    </source>
</evidence>
<evidence type="ECO:0000305" key="7"/>
<name>TMCO3_HUMAN</name>
<organism>
    <name type="scientific">Homo sapiens</name>
    <name type="common">Human</name>
    <dbReference type="NCBI Taxonomy" id="9606"/>
    <lineage>
        <taxon>Eukaryota</taxon>
        <taxon>Metazoa</taxon>
        <taxon>Chordata</taxon>
        <taxon>Craniata</taxon>
        <taxon>Vertebrata</taxon>
        <taxon>Euteleostomi</taxon>
        <taxon>Mammalia</taxon>
        <taxon>Eutheria</taxon>
        <taxon>Euarchontoglires</taxon>
        <taxon>Primates</taxon>
        <taxon>Haplorrhini</taxon>
        <taxon>Catarrhini</taxon>
        <taxon>Hominidae</taxon>
        <taxon>Homo</taxon>
    </lineage>
</organism>
<comment type="function">
    <text evidence="1">Probable Na(+)/H(+) antiporter.</text>
</comment>
<comment type="subcellular location">
    <subcellularLocation>
        <location evidence="7">Membrane</location>
        <topology evidence="7">Multi-pass membrane protein</topology>
    </subcellularLocation>
</comment>
<comment type="alternative products">
    <event type="alternative splicing"/>
    <isoform>
        <id>Q6UWJ1-1</id>
        <name>1</name>
        <sequence type="displayed"/>
    </isoform>
    <isoform>
        <id>Q6UWJ1-2</id>
        <name>2</name>
        <sequence type="described" ref="VSP_020563 VSP_020564"/>
    </isoform>
    <isoform>
        <id>Q6UWJ1-3</id>
        <name>3</name>
        <sequence type="described" ref="VSP_020561 VSP_020562"/>
    </isoform>
</comment>
<comment type="tissue specificity">
    <text evidence="4">Expressed in the cornea, lens capsule and choroid-retinal pigment epithelium (at protein level).</text>
</comment>
<comment type="similarity">
    <text evidence="7">Belongs to the monovalent cation:proton antiporter 2 (CPA2) transporter (TC 2.A.37) family.</text>
</comment>
<comment type="sequence caution" evidence="7">
    <conflict type="frameshift">
        <sequence resource="EMBL-CDS" id="AAM92892"/>
    </conflict>
</comment>
<comment type="sequence caution" evidence="7">
    <conflict type="erroneous initiation">
        <sequence resource="EMBL-CDS" id="BAB85074"/>
    </conflict>
    <text>Truncated N-terminus.</text>
</comment>
<sequence length="677" mass="75598">MKVLGRSFFWVLFPVLPWAVQAVEHEEVAQRVIKLHRGRGVAAMQSRQWVRDSCRKLSGLLRQKNAVLNKLKTAIGAVEKDVGLSDEEKLFQVHTFEIFQKELNESENSVFQAVYGLQRALQGDYKDVVNMKESSRQRLEALREAAIKEETEYMELLAAEKHQVEALKNMQHQNQSLSMLDEILEDVRKAADRLEEEIEEHAFDDNKSVKGVNFEAVLRVEEEEANSKQNITKREVEDDLGLSMLIDSQNNQYILTKPRDSTIPRADHHFIKDIVTIGMLSLPCGWLCTAIGLPTMFGYIICGVLLGPSGLNSIKSIVQVETLGEFGVFFTLFLVGLEFSPEKLRKVWKISLQGPCYMTLLMIAFGLLWGHLLRIKPTQSVFISTCLSLSSTPLVSRFLMGSARGDKEGDIDYSTVLLGMLVTQDVQLGLFMAVMPTLIQAGASASSSIVVEVLRILVLIGQILFSLAAVFLLCLVIKKYLIGPYYRKLHMESKGNKEILILGISAFIFLMLTVTELLDVSMELGCFLAGALVSSQGPVVTEEIATSIEPIRDFLAIVFFASIGLHVFPTFVAYELTVLVFLTLSVVVMKFLLAALVLSLILPRSSQYIKWIVSAGLAQVSEFSFVLGSRARRAGVISREVYLLILSVTTLSLLLAPVLWRAAITRCVPRPERRSSL</sequence>
<accession>Q6UWJ1</accession>
<accession>Q5JSB1</accession>
<accession>Q6NUN1</accession>
<accession>Q8NG29</accession>
<accession>Q8TCI6</accession>
<accession>Q96EA6</accession>
<accession>Q9NWT2</accession>
<gene>
    <name type="primary">TMCO3</name>
    <name type="synonym">C13orf11</name>
    <name type="ORF">UNQ2419/PRO4976</name>
</gene>
<dbReference type="EMBL" id="AY358768">
    <property type="protein sequence ID" value="AAQ89128.1"/>
    <property type="molecule type" value="mRNA"/>
</dbReference>
<dbReference type="EMBL" id="AK000630">
    <property type="protein sequence ID" value="BAA91295.1"/>
    <property type="molecule type" value="mRNA"/>
</dbReference>
<dbReference type="EMBL" id="AK074415">
    <property type="protein sequence ID" value="BAB85074.1"/>
    <property type="status" value="ALT_INIT"/>
    <property type="molecule type" value="mRNA"/>
</dbReference>
<dbReference type="EMBL" id="AL442125">
    <property type="status" value="NOT_ANNOTATED_CDS"/>
    <property type="molecule type" value="Genomic_DNA"/>
</dbReference>
<dbReference type="EMBL" id="BC068515">
    <property type="protein sequence ID" value="AAH68515.1"/>
    <property type="molecule type" value="mRNA"/>
</dbReference>
<dbReference type="EMBL" id="BC012564">
    <property type="protein sequence ID" value="AAH12564.1"/>
    <property type="molecule type" value="mRNA"/>
</dbReference>
<dbReference type="EMBL" id="AF209505">
    <property type="protein sequence ID" value="AAM92892.1"/>
    <property type="status" value="ALT_FRAME"/>
    <property type="molecule type" value="mRNA"/>
</dbReference>
<dbReference type="CCDS" id="CCDS86365.1">
    <molecule id="Q6UWJ1-2"/>
</dbReference>
<dbReference type="CCDS" id="CCDS9537.1">
    <molecule id="Q6UWJ1-1"/>
</dbReference>
<dbReference type="RefSeq" id="NP_001336670.1">
    <molecule id="Q6UWJ1-2"/>
    <property type="nucleotide sequence ID" value="NM_001349741.2"/>
</dbReference>
<dbReference type="RefSeq" id="NP_060375.4">
    <molecule id="Q6UWJ1-1"/>
    <property type="nucleotide sequence ID" value="NM_017905.4"/>
</dbReference>
<dbReference type="RefSeq" id="XP_006720032.1">
    <molecule id="Q6UWJ1-1"/>
    <property type="nucleotide sequence ID" value="XM_006719969.2"/>
</dbReference>
<dbReference type="RefSeq" id="XP_011535800.1">
    <molecule id="Q6UWJ1-1"/>
    <property type="nucleotide sequence ID" value="XM_011537498.3"/>
</dbReference>
<dbReference type="RefSeq" id="XP_054230593.1">
    <molecule id="Q6UWJ1-1"/>
    <property type="nucleotide sequence ID" value="XM_054374618.1"/>
</dbReference>
<dbReference type="RefSeq" id="XP_054230594.1">
    <molecule id="Q6UWJ1-1"/>
    <property type="nucleotide sequence ID" value="XM_054374619.1"/>
</dbReference>
<dbReference type="SMR" id="Q6UWJ1"/>
<dbReference type="BioGRID" id="120334">
    <property type="interactions" value="65"/>
</dbReference>
<dbReference type="FunCoup" id="Q6UWJ1">
    <property type="interactions" value="257"/>
</dbReference>
<dbReference type="IntAct" id="Q6UWJ1">
    <property type="interactions" value="53"/>
</dbReference>
<dbReference type="MINT" id="Q6UWJ1"/>
<dbReference type="STRING" id="9606.ENSP00000389399"/>
<dbReference type="TCDB" id="2.A.37.1.11">
    <property type="family name" value="the monovalent cation:proton antiporter-2 (cpa2) family"/>
</dbReference>
<dbReference type="GlyCosmos" id="Q6UWJ1">
    <property type="glycosylation" value="4 sites, 1 glycan"/>
</dbReference>
<dbReference type="GlyGen" id="Q6UWJ1">
    <property type="glycosylation" value="8 sites, 5 N-linked glycans (3 sites), 3 O-linked glycans (4 sites)"/>
</dbReference>
<dbReference type="iPTMnet" id="Q6UWJ1"/>
<dbReference type="PhosphoSitePlus" id="Q6UWJ1"/>
<dbReference type="SwissPalm" id="Q6UWJ1"/>
<dbReference type="BioMuta" id="TMCO3"/>
<dbReference type="DMDM" id="74749389"/>
<dbReference type="jPOST" id="Q6UWJ1"/>
<dbReference type="MassIVE" id="Q6UWJ1"/>
<dbReference type="PaxDb" id="9606-ENSP00000389399"/>
<dbReference type="PeptideAtlas" id="Q6UWJ1"/>
<dbReference type="ProteomicsDB" id="67484">
    <molecule id="Q6UWJ1-1"/>
</dbReference>
<dbReference type="ProteomicsDB" id="67485">
    <molecule id="Q6UWJ1-2"/>
</dbReference>
<dbReference type="ProteomicsDB" id="67486">
    <molecule id="Q6UWJ1-3"/>
</dbReference>
<dbReference type="Pumba" id="Q6UWJ1"/>
<dbReference type="Antibodypedia" id="25950">
    <property type="antibodies" value="58 antibodies from 16 providers"/>
</dbReference>
<dbReference type="DNASU" id="55002"/>
<dbReference type="Ensembl" id="ENST00000375391.5">
    <molecule id="Q6UWJ1-3"/>
    <property type="protein sequence ID" value="ENSP00000364540.1"/>
    <property type="gene ID" value="ENSG00000150403.18"/>
</dbReference>
<dbReference type="Ensembl" id="ENST00000434316.7">
    <molecule id="Q6UWJ1-1"/>
    <property type="protein sequence ID" value="ENSP00000389399.2"/>
    <property type="gene ID" value="ENSG00000150403.18"/>
</dbReference>
<dbReference type="Ensembl" id="ENST00000474393.5">
    <molecule id="Q6UWJ1-2"/>
    <property type="protein sequence ID" value="ENSP00000484053.1"/>
    <property type="gene ID" value="ENSG00000150403.18"/>
</dbReference>
<dbReference type="GeneID" id="55002"/>
<dbReference type="KEGG" id="hsa:55002"/>
<dbReference type="MANE-Select" id="ENST00000434316.7">
    <property type="protein sequence ID" value="ENSP00000389399.2"/>
    <property type="RefSeq nucleotide sequence ID" value="NM_017905.6"/>
    <property type="RefSeq protein sequence ID" value="NP_060375.4"/>
</dbReference>
<dbReference type="UCSC" id="uc001vtt.5">
    <molecule id="Q6UWJ1-1"/>
    <property type="organism name" value="human"/>
</dbReference>
<dbReference type="AGR" id="HGNC:20329"/>
<dbReference type="CTD" id="55002"/>
<dbReference type="DisGeNET" id="55002"/>
<dbReference type="GeneCards" id="TMCO3"/>
<dbReference type="HGNC" id="HGNC:20329">
    <property type="gene designation" value="TMCO3"/>
</dbReference>
<dbReference type="HPA" id="ENSG00000150403">
    <property type="expression patterns" value="Low tissue specificity"/>
</dbReference>
<dbReference type="MIM" id="617134">
    <property type="type" value="gene"/>
</dbReference>
<dbReference type="neXtProt" id="NX_Q6UWJ1"/>
<dbReference type="OpenTargets" id="ENSG00000150403"/>
<dbReference type="PharmGKB" id="PA134989495"/>
<dbReference type="VEuPathDB" id="HostDB:ENSG00000150403"/>
<dbReference type="eggNOG" id="KOG1650">
    <property type="taxonomic scope" value="Eukaryota"/>
</dbReference>
<dbReference type="GeneTree" id="ENSGT00390000001394"/>
<dbReference type="HOGENOM" id="CLU_026093_0_0_1"/>
<dbReference type="InParanoid" id="Q6UWJ1"/>
<dbReference type="OMA" id="IKAHASK"/>
<dbReference type="OrthoDB" id="1654420at2759"/>
<dbReference type="PAN-GO" id="Q6UWJ1">
    <property type="GO annotations" value="0 GO annotations based on evolutionary models"/>
</dbReference>
<dbReference type="PhylomeDB" id="Q6UWJ1"/>
<dbReference type="TreeFam" id="TF329364"/>
<dbReference type="PathwayCommons" id="Q6UWJ1"/>
<dbReference type="SignaLink" id="Q6UWJ1"/>
<dbReference type="BioGRID-ORCS" id="55002">
    <property type="hits" value="21 hits in 1159 CRISPR screens"/>
</dbReference>
<dbReference type="ChiTaRS" id="TMCO3">
    <property type="organism name" value="human"/>
</dbReference>
<dbReference type="GenomeRNAi" id="55002"/>
<dbReference type="Pharos" id="Q6UWJ1">
    <property type="development level" value="Tdark"/>
</dbReference>
<dbReference type="PRO" id="PR:Q6UWJ1"/>
<dbReference type="Proteomes" id="UP000005640">
    <property type="component" value="Chromosome 13"/>
</dbReference>
<dbReference type="RNAct" id="Q6UWJ1">
    <property type="molecule type" value="protein"/>
</dbReference>
<dbReference type="Bgee" id="ENSG00000150403">
    <property type="expression patterns" value="Expressed in stromal cell of endometrium and 186 other cell types or tissues"/>
</dbReference>
<dbReference type="ExpressionAtlas" id="Q6UWJ1">
    <property type="expression patterns" value="baseline and differential"/>
</dbReference>
<dbReference type="GO" id="GO:0016020">
    <property type="term" value="C:membrane"/>
    <property type="evidence" value="ECO:0007669"/>
    <property type="project" value="UniProtKB-SubCell"/>
</dbReference>
<dbReference type="GO" id="GO:0015386">
    <property type="term" value="F:potassium:proton antiporter activity"/>
    <property type="evidence" value="ECO:0007669"/>
    <property type="project" value="InterPro"/>
</dbReference>
<dbReference type="Gene3D" id="1.20.1530.20">
    <property type="match status" value="1"/>
</dbReference>
<dbReference type="InterPro" id="IPR006153">
    <property type="entry name" value="Cation/H_exchanger_TM"/>
</dbReference>
<dbReference type="InterPro" id="IPR045158">
    <property type="entry name" value="KEA4/5/6-like"/>
</dbReference>
<dbReference type="InterPro" id="IPR038770">
    <property type="entry name" value="Na+/solute_symporter_sf"/>
</dbReference>
<dbReference type="PANTHER" id="PTHR16254">
    <property type="entry name" value="POTASSIUM/PROTON ANTIPORTER-RELATED"/>
    <property type="match status" value="1"/>
</dbReference>
<dbReference type="PANTHER" id="PTHR16254:SF14">
    <property type="entry name" value="TRANSMEMBRANE AND COILED-COIL DOMAIN-CONTAINING PROTEIN 3"/>
    <property type="match status" value="1"/>
</dbReference>
<dbReference type="Pfam" id="PF00999">
    <property type="entry name" value="Na_H_Exchanger"/>
    <property type="match status" value="1"/>
</dbReference>
<protein>
    <recommendedName>
        <fullName>Transmembrane and coiled-coil domain-containing protein 3</fullName>
    </recommendedName>
    <alternativeName>
        <fullName>Putative LAG1-interacting protein</fullName>
    </alternativeName>
</protein>
<keyword id="KW-0025">Alternative splicing</keyword>
<keyword id="KW-0050">Antiport</keyword>
<keyword id="KW-0175">Coiled coil</keyword>
<keyword id="KW-0325">Glycoprotein</keyword>
<keyword id="KW-0406">Ion transport</keyword>
<keyword id="KW-0472">Membrane</keyword>
<keyword id="KW-1267">Proteomics identification</keyword>
<keyword id="KW-1185">Reference proteome</keyword>
<keyword id="KW-0732">Signal</keyword>
<keyword id="KW-0812">Transmembrane</keyword>
<keyword id="KW-1133">Transmembrane helix</keyword>
<keyword id="KW-0813">Transport</keyword>